<feature type="chain" id="PRO_0000282310" description="Conserved virulence factor C">
    <location>
        <begin position="1"/>
        <end position="374"/>
    </location>
</feature>
<dbReference type="EMBL" id="CP000255">
    <property type="protein sequence ID" value="ABD21983.1"/>
    <property type="molecule type" value="Genomic_DNA"/>
</dbReference>
<dbReference type="RefSeq" id="WP_000404653.1">
    <property type="nucleotide sequence ID" value="NZ_CP027476.1"/>
</dbReference>
<dbReference type="SMR" id="Q2FH09"/>
<dbReference type="KEGG" id="saa:SAUSA300_1322"/>
<dbReference type="HOGENOM" id="CLU_733295_0_0_9"/>
<dbReference type="OMA" id="KNKLVRW"/>
<dbReference type="Proteomes" id="UP000001939">
    <property type="component" value="Chromosome"/>
</dbReference>
<dbReference type="GO" id="GO:0016491">
    <property type="term" value="F:oxidoreductase activity"/>
    <property type="evidence" value="ECO:0007669"/>
    <property type="project" value="TreeGrafter"/>
</dbReference>
<dbReference type="Gene3D" id="1.25.10.10">
    <property type="entry name" value="Leucine-rich Repeat Variant"/>
    <property type="match status" value="1"/>
</dbReference>
<dbReference type="Gene3D" id="3.30.1370.70">
    <property type="entry name" value="Scaffold protein Nfu/NifU, N-terminal domain"/>
    <property type="match status" value="1"/>
</dbReference>
<dbReference type="InterPro" id="IPR011989">
    <property type="entry name" value="ARM-like"/>
</dbReference>
<dbReference type="InterPro" id="IPR016024">
    <property type="entry name" value="ARM-type_fold"/>
</dbReference>
<dbReference type="InterPro" id="IPR014824">
    <property type="entry name" value="Nfu/NifU_N"/>
</dbReference>
<dbReference type="InterPro" id="IPR036498">
    <property type="entry name" value="Nfu/NifU_N_sf"/>
</dbReference>
<dbReference type="InterPro" id="IPR004155">
    <property type="entry name" value="PBS_lyase_HEAT"/>
</dbReference>
<dbReference type="InterPro" id="IPR025989">
    <property type="entry name" value="Virulence_F_dom"/>
</dbReference>
<dbReference type="PANTHER" id="PTHR12697:SF37">
    <property type="entry name" value="CONSERVED VIRULENCE FACTOR C"/>
    <property type="match status" value="1"/>
</dbReference>
<dbReference type="PANTHER" id="PTHR12697">
    <property type="entry name" value="PBS LYASE HEAT-LIKE PROTEIN"/>
    <property type="match status" value="1"/>
</dbReference>
<dbReference type="Pfam" id="PF13646">
    <property type="entry name" value="HEAT_2"/>
    <property type="match status" value="1"/>
</dbReference>
<dbReference type="Pfam" id="PF08712">
    <property type="entry name" value="Nfu_N"/>
    <property type="match status" value="1"/>
</dbReference>
<dbReference type="Pfam" id="PF13769">
    <property type="entry name" value="Virulence_fact"/>
    <property type="match status" value="1"/>
</dbReference>
<dbReference type="SMART" id="SM00567">
    <property type="entry name" value="EZ_HEAT"/>
    <property type="match status" value="3"/>
</dbReference>
<dbReference type="SMART" id="SM00932">
    <property type="entry name" value="Nfu_N"/>
    <property type="match status" value="1"/>
</dbReference>
<dbReference type="SUPFAM" id="SSF48371">
    <property type="entry name" value="ARM repeat"/>
    <property type="match status" value="1"/>
</dbReference>
<dbReference type="SUPFAM" id="SSF110836">
    <property type="entry name" value="Hypothetical protein SAV1430"/>
    <property type="match status" value="1"/>
</dbReference>
<sequence length="374" mass="42981">MEILRIEPTPSPNTMKVVLSYTREDKLSNTYKKVEETQPRFINQLLSIDGITSIFHVMNFLAVDKAPKADWEVILPDIKAAFSDANKVLESVNEPQIDNHFGEIKAELLTFKGIPYQIKLTSADQELREQLPQTYVDHMTQAQTAHDNIVFMRKWLDLGNRYGNIQEVMDGVLEEVLTTYPESQLPVLVKHALEENHATNNYHFYRHVSLDEYHATDNWKTRLRMLNHFPKPTFEDIPLLDLALSDEKVPVRRQAIVLLGMIESKEILPYLYKGLRDKSPVVRRTAGDCISDLGYPEALPEMVLLLDDPQKIVRWRAAMFIFDEGNAEQLPALKAHINDNAFEVKLQIEMAISRIENGDEALGSVWKQMANRTI</sequence>
<evidence type="ECO:0000250" key="1"/>
<evidence type="ECO:0000305" key="2"/>
<name>CVFC_STAA3</name>
<proteinExistence type="inferred from homology"/>
<protein>
    <recommendedName>
        <fullName>Conserved virulence factor C</fullName>
    </recommendedName>
</protein>
<accession>Q2FH09</accession>
<comment type="function">
    <text evidence="1">Required for hemolysin production.</text>
</comment>
<comment type="similarity">
    <text evidence="2">Belongs to the CvfC family.</text>
</comment>
<keyword id="KW-0843">Virulence</keyword>
<gene>
    <name type="primary">cvfC</name>
    <name type="ordered locus">SAUSA300_1322</name>
</gene>
<organism>
    <name type="scientific">Staphylococcus aureus (strain USA300)</name>
    <dbReference type="NCBI Taxonomy" id="367830"/>
    <lineage>
        <taxon>Bacteria</taxon>
        <taxon>Bacillati</taxon>
        <taxon>Bacillota</taxon>
        <taxon>Bacilli</taxon>
        <taxon>Bacillales</taxon>
        <taxon>Staphylococcaceae</taxon>
        <taxon>Staphylococcus</taxon>
    </lineage>
</organism>
<reference key="1">
    <citation type="journal article" date="2006" name="Lancet">
        <title>Complete genome sequence of USA300, an epidemic clone of community-acquired meticillin-resistant Staphylococcus aureus.</title>
        <authorList>
            <person name="Diep B.A."/>
            <person name="Gill S.R."/>
            <person name="Chang R.F."/>
            <person name="Phan T.H."/>
            <person name="Chen J.H."/>
            <person name="Davidson M.G."/>
            <person name="Lin F."/>
            <person name="Lin J."/>
            <person name="Carleton H.A."/>
            <person name="Mongodin E.F."/>
            <person name="Sensabaugh G.F."/>
            <person name="Perdreau-Remington F."/>
        </authorList>
    </citation>
    <scope>NUCLEOTIDE SEQUENCE [LARGE SCALE GENOMIC DNA]</scope>
    <source>
        <strain>USA300</strain>
    </source>
</reference>